<comment type="function">
    <text evidence="1">Probable ppGpp (guanosine 3'-diphosphate 5'-diphosphate) synthetase that may be involved in a rapid plant ppGpp-mediated response to pathogens and other stresses.</text>
</comment>
<comment type="catalytic activity">
    <reaction>
        <text>GTP + ATP = guanosine 3'-diphosphate 5'-triphosphate + AMP</text>
        <dbReference type="Rhea" id="RHEA:22088"/>
        <dbReference type="ChEBI" id="CHEBI:30616"/>
        <dbReference type="ChEBI" id="CHEBI:37565"/>
        <dbReference type="ChEBI" id="CHEBI:142410"/>
        <dbReference type="ChEBI" id="CHEBI:456215"/>
        <dbReference type="EC" id="2.7.6.5"/>
    </reaction>
</comment>
<comment type="subcellular location">
    <subcellularLocation>
        <location evidence="5">Plastid</location>
        <location evidence="5">Chloroplast</location>
    </subcellularLocation>
</comment>
<comment type="similarity">
    <text evidence="5">Belongs to the RelA/SpoT family.</text>
</comment>
<evidence type="ECO:0000250" key="1"/>
<evidence type="ECO:0000255" key="2"/>
<evidence type="ECO:0000255" key="3">
    <source>
        <dbReference type="PROSITE-ProRule" id="PRU01175"/>
    </source>
</evidence>
<evidence type="ECO:0000256" key="4">
    <source>
        <dbReference type="SAM" id="MobiDB-lite"/>
    </source>
</evidence>
<evidence type="ECO:0000305" key="5"/>
<reference key="1">
    <citation type="submission" date="2002-10" db="EMBL/GenBank/DDBJ databases">
        <title>Oryza sativa (japonica cultivar-group) plastid (p)ppGpp synthase RSH2.</title>
        <authorList>
            <person name="Tozawa Y."/>
        </authorList>
    </citation>
    <scope>NUCLEOTIDE SEQUENCE [MRNA]</scope>
    <source>
        <strain>cv. Nipponbare</strain>
    </source>
</reference>
<reference key="2">
    <citation type="journal article" date="2005" name="Nature">
        <title>The map-based sequence of the rice genome.</title>
        <authorList>
            <consortium name="International rice genome sequencing project (IRGSP)"/>
        </authorList>
    </citation>
    <scope>NUCLEOTIDE SEQUENCE [LARGE SCALE GENOMIC DNA]</scope>
    <source>
        <strain>cv. Nipponbare</strain>
    </source>
</reference>
<reference key="3">
    <citation type="journal article" date="2008" name="Nucleic Acids Res.">
        <title>The rice annotation project database (RAP-DB): 2008 update.</title>
        <authorList>
            <consortium name="The rice annotation project (RAP)"/>
        </authorList>
    </citation>
    <scope>GENOME REANNOTATION</scope>
    <source>
        <strain>cv. Nipponbare</strain>
    </source>
</reference>
<reference key="4">
    <citation type="journal article" date="2013" name="Rice">
        <title>Improvement of the Oryza sativa Nipponbare reference genome using next generation sequence and optical map data.</title>
        <authorList>
            <person name="Kawahara Y."/>
            <person name="de la Bastide M."/>
            <person name="Hamilton J.P."/>
            <person name="Kanamori H."/>
            <person name="McCombie W.R."/>
            <person name="Ouyang S."/>
            <person name="Schwartz D.C."/>
            <person name="Tanaka T."/>
            <person name="Wu J."/>
            <person name="Zhou S."/>
            <person name="Childs K.L."/>
            <person name="Davidson R.M."/>
            <person name="Lin H."/>
            <person name="Quesada-Ocampo L."/>
            <person name="Vaillancourt B."/>
            <person name="Sakai H."/>
            <person name="Lee S.S."/>
            <person name="Kim J."/>
            <person name="Numa H."/>
            <person name="Itoh T."/>
            <person name="Buell C.R."/>
            <person name="Matsumoto T."/>
        </authorList>
    </citation>
    <scope>GENOME REANNOTATION</scope>
    <source>
        <strain>cv. Nipponbare</strain>
    </source>
</reference>
<reference key="5">
    <citation type="journal article" date="2005" name="PLoS Biol.">
        <title>The genomes of Oryza sativa: a history of duplications.</title>
        <authorList>
            <person name="Yu J."/>
            <person name="Wang J."/>
            <person name="Lin W."/>
            <person name="Li S."/>
            <person name="Li H."/>
            <person name="Zhou J."/>
            <person name="Ni P."/>
            <person name="Dong W."/>
            <person name="Hu S."/>
            <person name="Zeng C."/>
            <person name="Zhang J."/>
            <person name="Zhang Y."/>
            <person name="Li R."/>
            <person name="Xu Z."/>
            <person name="Li S."/>
            <person name="Li X."/>
            <person name="Zheng H."/>
            <person name="Cong L."/>
            <person name="Lin L."/>
            <person name="Yin J."/>
            <person name="Geng J."/>
            <person name="Li G."/>
            <person name="Shi J."/>
            <person name="Liu J."/>
            <person name="Lv H."/>
            <person name="Li J."/>
            <person name="Wang J."/>
            <person name="Deng Y."/>
            <person name="Ran L."/>
            <person name="Shi X."/>
            <person name="Wang X."/>
            <person name="Wu Q."/>
            <person name="Li C."/>
            <person name="Ren X."/>
            <person name="Wang J."/>
            <person name="Wang X."/>
            <person name="Li D."/>
            <person name="Liu D."/>
            <person name="Zhang X."/>
            <person name="Ji Z."/>
            <person name="Zhao W."/>
            <person name="Sun Y."/>
            <person name="Zhang Z."/>
            <person name="Bao J."/>
            <person name="Han Y."/>
            <person name="Dong L."/>
            <person name="Ji J."/>
            <person name="Chen P."/>
            <person name="Wu S."/>
            <person name="Liu J."/>
            <person name="Xiao Y."/>
            <person name="Bu D."/>
            <person name="Tan J."/>
            <person name="Yang L."/>
            <person name="Ye C."/>
            <person name="Zhang J."/>
            <person name="Xu J."/>
            <person name="Zhou Y."/>
            <person name="Yu Y."/>
            <person name="Zhang B."/>
            <person name="Zhuang S."/>
            <person name="Wei H."/>
            <person name="Liu B."/>
            <person name="Lei M."/>
            <person name="Yu H."/>
            <person name="Li Y."/>
            <person name="Xu H."/>
            <person name="Wei S."/>
            <person name="He X."/>
            <person name="Fang L."/>
            <person name="Zhang Z."/>
            <person name="Zhang Y."/>
            <person name="Huang X."/>
            <person name="Su Z."/>
            <person name="Tong W."/>
            <person name="Li J."/>
            <person name="Tong Z."/>
            <person name="Li S."/>
            <person name="Ye J."/>
            <person name="Wang L."/>
            <person name="Fang L."/>
            <person name="Lei T."/>
            <person name="Chen C.-S."/>
            <person name="Chen H.-C."/>
            <person name="Xu Z."/>
            <person name="Li H."/>
            <person name="Huang H."/>
            <person name="Zhang F."/>
            <person name="Xu H."/>
            <person name="Li N."/>
            <person name="Zhao C."/>
            <person name="Li S."/>
            <person name="Dong L."/>
            <person name="Huang Y."/>
            <person name="Li L."/>
            <person name="Xi Y."/>
            <person name="Qi Q."/>
            <person name="Li W."/>
            <person name="Zhang B."/>
            <person name="Hu W."/>
            <person name="Zhang Y."/>
            <person name="Tian X."/>
            <person name="Jiao Y."/>
            <person name="Liang X."/>
            <person name="Jin J."/>
            <person name="Gao L."/>
            <person name="Zheng W."/>
            <person name="Hao B."/>
            <person name="Liu S.-M."/>
            <person name="Wang W."/>
            <person name="Yuan L."/>
            <person name="Cao M."/>
            <person name="McDermott J."/>
            <person name="Samudrala R."/>
            <person name="Wang J."/>
            <person name="Wong G.K.-S."/>
            <person name="Yang H."/>
        </authorList>
    </citation>
    <scope>NUCLEOTIDE SEQUENCE [LARGE SCALE GENOMIC DNA]</scope>
    <source>
        <strain>cv. Nipponbare</strain>
    </source>
</reference>
<reference key="6">
    <citation type="journal article" date="2003" name="Science">
        <title>Collection, mapping, and annotation of over 28,000 cDNA clones from japonica rice.</title>
        <authorList>
            <consortium name="The rice full-length cDNA consortium"/>
        </authorList>
    </citation>
    <scope>NUCLEOTIDE SEQUENCE [LARGE SCALE MRNA]</scope>
    <source>
        <strain>cv. Nipponbare</strain>
    </source>
</reference>
<feature type="transit peptide" description="Chloroplast" evidence="2">
    <location>
        <begin position="1"/>
        <end position="68"/>
    </location>
</feature>
<feature type="chain" id="PRO_0000429849" description="Probable GTP diphosphokinase RSH2, chloroplastic">
    <location>
        <begin position="69"/>
        <end position="718"/>
    </location>
</feature>
<feature type="domain" description="HD" evidence="3">
    <location>
        <begin position="243"/>
        <end position="347"/>
    </location>
</feature>
<feature type="region of interest" description="Disordered" evidence="4">
    <location>
        <begin position="9"/>
        <end position="48"/>
    </location>
</feature>
<feature type="compositionally biased region" description="Low complexity" evidence="4">
    <location>
        <begin position="19"/>
        <end position="39"/>
    </location>
</feature>
<dbReference type="EC" id="2.7.6.5"/>
<dbReference type="EMBL" id="AB095096">
    <property type="protein sequence ID" value="BAC81140.1"/>
    <property type="molecule type" value="mRNA"/>
</dbReference>
<dbReference type="EMBL" id="AP004586">
    <property type="protein sequence ID" value="BAD09583.1"/>
    <property type="molecule type" value="Genomic_DNA"/>
</dbReference>
<dbReference type="EMBL" id="AP008214">
    <property type="protein sequence ID" value="BAF23883.1"/>
    <property type="molecule type" value="Genomic_DNA"/>
</dbReference>
<dbReference type="EMBL" id="AP014964">
    <property type="protein sequence ID" value="BAT05740.1"/>
    <property type="molecule type" value="Genomic_DNA"/>
</dbReference>
<dbReference type="EMBL" id="CM000145">
    <property type="protein sequence ID" value="EEE68808.1"/>
    <property type="molecule type" value="Genomic_DNA"/>
</dbReference>
<dbReference type="EMBL" id="AK065020">
    <property type="protein sequence ID" value="BAG89329.1"/>
    <property type="molecule type" value="mRNA"/>
</dbReference>
<dbReference type="EMBL" id="AK099624">
    <property type="protein sequence ID" value="BAG94226.1"/>
    <property type="molecule type" value="mRNA"/>
</dbReference>
<dbReference type="RefSeq" id="XP_015650642.1">
    <property type="nucleotide sequence ID" value="XM_015795156.1"/>
</dbReference>
<dbReference type="SMR" id="Q7XAP4"/>
<dbReference type="FunCoup" id="Q7XAP4">
    <property type="interactions" value="740"/>
</dbReference>
<dbReference type="STRING" id="39947.Q7XAP4"/>
<dbReference type="PaxDb" id="39947-Q7XAP4"/>
<dbReference type="EnsemblPlants" id="Os08t0457600-01">
    <property type="protein sequence ID" value="Os08t0457600-01"/>
    <property type="gene ID" value="Os08g0457600"/>
</dbReference>
<dbReference type="EnsemblPlants" id="Os08t0457600-02">
    <property type="protein sequence ID" value="Os08t0457600-02"/>
    <property type="gene ID" value="Os08g0457600"/>
</dbReference>
<dbReference type="Gramene" id="Os08t0457600-01">
    <property type="protein sequence ID" value="Os08t0457600-01"/>
    <property type="gene ID" value="Os08g0457600"/>
</dbReference>
<dbReference type="Gramene" id="Os08t0457600-02">
    <property type="protein sequence ID" value="Os08t0457600-02"/>
    <property type="gene ID" value="Os08g0457600"/>
</dbReference>
<dbReference type="KEGG" id="dosa:Os08g0457600"/>
<dbReference type="eggNOG" id="KOG1157">
    <property type="taxonomic scope" value="Eukaryota"/>
</dbReference>
<dbReference type="HOGENOM" id="CLU_012300_7_1_1"/>
<dbReference type="InParanoid" id="Q7XAP4"/>
<dbReference type="OMA" id="YISHPKF"/>
<dbReference type="OrthoDB" id="430679at2759"/>
<dbReference type="Proteomes" id="UP000000763">
    <property type="component" value="Chromosome 8"/>
</dbReference>
<dbReference type="Proteomes" id="UP000007752">
    <property type="component" value="Chromosome 8"/>
</dbReference>
<dbReference type="Proteomes" id="UP000059680">
    <property type="component" value="Chromosome 8"/>
</dbReference>
<dbReference type="GO" id="GO:0009507">
    <property type="term" value="C:chloroplast"/>
    <property type="evidence" value="ECO:0000318"/>
    <property type="project" value="GO_Central"/>
</dbReference>
<dbReference type="GO" id="GO:0005524">
    <property type="term" value="F:ATP binding"/>
    <property type="evidence" value="ECO:0007669"/>
    <property type="project" value="UniProtKB-KW"/>
</dbReference>
<dbReference type="GO" id="GO:0005525">
    <property type="term" value="F:GTP binding"/>
    <property type="evidence" value="ECO:0007669"/>
    <property type="project" value="UniProtKB-KW"/>
</dbReference>
<dbReference type="GO" id="GO:0008728">
    <property type="term" value="F:GTP diphosphokinase activity"/>
    <property type="evidence" value="ECO:0007669"/>
    <property type="project" value="UniProtKB-EC"/>
</dbReference>
<dbReference type="GO" id="GO:0016301">
    <property type="term" value="F:kinase activity"/>
    <property type="evidence" value="ECO:0007669"/>
    <property type="project" value="UniProtKB-KW"/>
</dbReference>
<dbReference type="GO" id="GO:0015969">
    <property type="term" value="P:guanosine tetraphosphate metabolic process"/>
    <property type="evidence" value="ECO:0007669"/>
    <property type="project" value="InterPro"/>
</dbReference>
<dbReference type="CDD" id="cd00077">
    <property type="entry name" value="HDc"/>
    <property type="match status" value="1"/>
</dbReference>
<dbReference type="CDD" id="cd05399">
    <property type="entry name" value="NT_Rel-Spo_like"/>
    <property type="match status" value="1"/>
</dbReference>
<dbReference type="FunFam" id="1.10.3210.10:FF:000001">
    <property type="entry name" value="GTP pyrophosphokinase RelA"/>
    <property type="match status" value="1"/>
</dbReference>
<dbReference type="FunFam" id="3.30.460.10:FF:000001">
    <property type="entry name" value="GTP pyrophosphokinase RelA"/>
    <property type="match status" value="1"/>
</dbReference>
<dbReference type="Gene3D" id="3.30.460.10">
    <property type="entry name" value="Beta Polymerase, domain 2"/>
    <property type="match status" value="1"/>
</dbReference>
<dbReference type="Gene3D" id="1.10.3210.10">
    <property type="entry name" value="Hypothetical protein af1432"/>
    <property type="match status" value="1"/>
</dbReference>
<dbReference type="InterPro" id="IPR003607">
    <property type="entry name" value="HD/PDEase_dom"/>
</dbReference>
<dbReference type="InterPro" id="IPR006674">
    <property type="entry name" value="HD_domain"/>
</dbReference>
<dbReference type="InterPro" id="IPR043519">
    <property type="entry name" value="NT_sf"/>
</dbReference>
<dbReference type="InterPro" id="IPR007685">
    <property type="entry name" value="RelA_SpoT"/>
</dbReference>
<dbReference type="PANTHER" id="PTHR21262:SF34">
    <property type="entry name" value="GTP DIPHOSPHOKINASE RSH2, CHLOROPLASTIC-RELATED"/>
    <property type="match status" value="1"/>
</dbReference>
<dbReference type="PANTHER" id="PTHR21262">
    <property type="entry name" value="GUANOSINE-3',5'-BIS DIPHOSPHATE 3'-PYROPHOSPHOHYDROLASE"/>
    <property type="match status" value="1"/>
</dbReference>
<dbReference type="Pfam" id="PF13328">
    <property type="entry name" value="HD_4"/>
    <property type="match status" value="1"/>
</dbReference>
<dbReference type="Pfam" id="PF04607">
    <property type="entry name" value="RelA_SpoT"/>
    <property type="match status" value="1"/>
</dbReference>
<dbReference type="SMART" id="SM00471">
    <property type="entry name" value="HDc"/>
    <property type="match status" value="1"/>
</dbReference>
<dbReference type="SMART" id="SM00954">
    <property type="entry name" value="RelA_SpoT"/>
    <property type="match status" value="1"/>
</dbReference>
<dbReference type="SUPFAM" id="SSF109604">
    <property type="entry name" value="HD-domain/PDEase-like"/>
    <property type="match status" value="1"/>
</dbReference>
<dbReference type="SUPFAM" id="SSF81301">
    <property type="entry name" value="Nucleotidyltransferase"/>
    <property type="match status" value="1"/>
</dbReference>
<dbReference type="PROSITE" id="PS51831">
    <property type="entry name" value="HD"/>
    <property type="match status" value="1"/>
</dbReference>
<protein>
    <recommendedName>
        <fullName>Probable GTP diphosphokinase RSH2, chloroplastic</fullName>
        <ecNumber>2.7.6.5</ecNumber>
    </recommendedName>
    <alternativeName>
        <fullName>RelA/SpoT homolog 2</fullName>
        <shortName>OsRSH2</shortName>
    </alternativeName>
    <alternativeName>
        <fullName>ppGpp synthetase RSH2</fullName>
    </alternativeName>
</protein>
<gene>
    <name type="primary">RSH2</name>
    <name type="ordered locus">Os08g0457600</name>
    <name type="ordered locus">LOC_Os08g35620</name>
    <name type="ORF">OsJ_27564</name>
    <name type="ORF">P0493A04.9</name>
</gene>
<keyword id="KW-0067">ATP-binding</keyword>
<keyword id="KW-0150">Chloroplast</keyword>
<keyword id="KW-0342">GTP-binding</keyword>
<keyword id="KW-0418">Kinase</keyword>
<keyword id="KW-0547">Nucleotide-binding</keyword>
<keyword id="KW-0934">Plastid</keyword>
<keyword id="KW-1185">Reference proteome</keyword>
<keyword id="KW-0346">Stress response</keyword>
<keyword id="KW-0808">Transferase</keyword>
<keyword id="KW-0809">Transit peptide</keyword>
<organism>
    <name type="scientific">Oryza sativa subsp. japonica</name>
    <name type="common">Rice</name>
    <dbReference type="NCBI Taxonomy" id="39947"/>
    <lineage>
        <taxon>Eukaryota</taxon>
        <taxon>Viridiplantae</taxon>
        <taxon>Streptophyta</taxon>
        <taxon>Embryophyta</taxon>
        <taxon>Tracheophyta</taxon>
        <taxon>Spermatophyta</taxon>
        <taxon>Magnoliopsida</taxon>
        <taxon>Liliopsida</taxon>
        <taxon>Poales</taxon>
        <taxon>Poaceae</taxon>
        <taxon>BOP clade</taxon>
        <taxon>Oryzoideae</taxon>
        <taxon>Oryzeae</taxon>
        <taxon>Oryzinae</taxon>
        <taxon>Oryza</taxon>
        <taxon>Oryza sativa</taxon>
    </lineage>
</organism>
<proteinExistence type="evidence at transcript level"/>
<name>RSH2_ORYSJ</name>
<accession>Q7XAP4</accession>
<accession>A0A0P0XGI7</accession>
<sequence length="718" mass="79148">MSVPAIAVYTSPPGAVYTSSSSSELEASSRGSAPCATAAPPSPASSHRHQAIAGGLSCLFSSPTAAPRAAAAQDELGALWHDRSGEATAVGGGGGGGGYSYPQPSSPFKWRDMLHHSPVPLFHSPASSPASRSPSASWLAGRERERLFSSFVRNALGSCVDYAPVAALPLGVSAAVGVGAGELAFELDEHLSEAEPSCEPYARDLLAGAQARHRIFHDELVVKAFFEAERAHRGQTRASGDPYLQHCVETAVLLAKIGANATVVSAGLLHDTIDDSFMDYDQIFRMFGAGVADLVEGVSKLSHLSKLARDNNTASRTVEADRLHTMFLAMADARAVLIKLADRLHNMKTIEALPLVKQQRFAKETMEIFVPLANRLGIASWKDQLENICFKHLNPEEHKELSSKLVISFDEALLTSTLDKLDKGLRDEGISYHSLSGRHKSLYSIYSKMIKKNLTMDDVHDIHGLRLVVDTEQDCYQALDIVHKLWPRVAGRFKDYILHPKLNGYRSLHTVIMCEGIHPFEVQIRTKEMHLQAEYGFAAHWRYKEGGCKHSFVLQMVEWARWVLTWQCEAMSKERSSGLGRSDAIRPPCPFPSHSEDCPYSYTRQCNHDGPIFVIMLEHDKMSVQELPANSTVVDLMERVGANSPRCSPYSFPLKEELRPRVNHKPISDPNRKLCMGDVVELTPALPHKSLTEYREEIQRMYERGGFALATTRDGPAS</sequence>